<sequence length="349" mass="37342">MAENAYSKAGVDVEAGYQVVERIKKHVARTERIGAMGALGSFGGMFDLSSLNLKEPVLVSGTDGVGTKLLLAIEADKHDTIGIDCVAMCVNDILAQGAEPLFFLDYIATGKTDPVKMEQIVKGVADGCEQAGAALIGGETAEMPDMYGADDYDLAGFTVGAVEKQKLITEGAVQAGDTLIGIPSSGIHSNGYSLVRKIFFKDNEFTLDAEISELDVPLVEELLKPTRIYVKPVLEVLKEVTVHGITHVTGGGFVENLPRMLTNDLAVKVELGSWPMLPIFDVVKKYGQLNEMEMYEIFNMGIGMVLAVAKSDVEKTLEVLVQNGEAAYVIGEVTTRESNAVIFAGGKKG</sequence>
<evidence type="ECO:0000255" key="1">
    <source>
        <dbReference type="HAMAP-Rule" id="MF_00741"/>
    </source>
</evidence>
<name>PUR5_LISMO</name>
<keyword id="KW-0067">ATP-binding</keyword>
<keyword id="KW-0963">Cytoplasm</keyword>
<keyword id="KW-0436">Ligase</keyword>
<keyword id="KW-0547">Nucleotide-binding</keyword>
<keyword id="KW-0658">Purine biosynthesis</keyword>
<keyword id="KW-1185">Reference proteome</keyword>
<dbReference type="EC" id="6.3.3.1" evidence="1"/>
<dbReference type="EMBL" id="AL591981">
    <property type="protein sequence ID" value="CAC99845.1"/>
    <property type="molecule type" value="Genomic_DNA"/>
</dbReference>
<dbReference type="PIR" id="AG1295">
    <property type="entry name" value="AG1295"/>
</dbReference>
<dbReference type="RefSeq" id="NP_465292.1">
    <property type="nucleotide sequence ID" value="NC_003210.1"/>
</dbReference>
<dbReference type="RefSeq" id="WP_009933235.1">
    <property type="nucleotide sequence ID" value="NZ_CP149495.1"/>
</dbReference>
<dbReference type="SMR" id="Q8Y6C3"/>
<dbReference type="STRING" id="169963.gene:17594449"/>
<dbReference type="PaxDb" id="169963-lmo1767"/>
<dbReference type="EnsemblBacteria" id="CAC99845">
    <property type="protein sequence ID" value="CAC99845"/>
    <property type="gene ID" value="CAC99845"/>
</dbReference>
<dbReference type="GeneID" id="985975"/>
<dbReference type="KEGG" id="lmo:lmo1767"/>
<dbReference type="PATRIC" id="fig|169963.11.peg.1811"/>
<dbReference type="eggNOG" id="COG0150">
    <property type="taxonomic scope" value="Bacteria"/>
</dbReference>
<dbReference type="HOGENOM" id="CLU_047116_0_0_9"/>
<dbReference type="OrthoDB" id="9802507at2"/>
<dbReference type="PhylomeDB" id="Q8Y6C3"/>
<dbReference type="BioCyc" id="LMON169963:LMO1767-MONOMER"/>
<dbReference type="UniPathway" id="UPA00074">
    <property type="reaction ID" value="UER00129"/>
</dbReference>
<dbReference type="Proteomes" id="UP000000817">
    <property type="component" value="Chromosome"/>
</dbReference>
<dbReference type="GO" id="GO:0005829">
    <property type="term" value="C:cytosol"/>
    <property type="evidence" value="ECO:0000318"/>
    <property type="project" value="GO_Central"/>
</dbReference>
<dbReference type="GO" id="GO:0005524">
    <property type="term" value="F:ATP binding"/>
    <property type="evidence" value="ECO:0007669"/>
    <property type="project" value="UniProtKB-KW"/>
</dbReference>
<dbReference type="GO" id="GO:0004637">
    <property type="term" value="F:phosphoribosylamine-glycine ligase activity"/>
    <property type="evidence" value="ECO:0000318"/>
    <property type="project" value="GO_Central"/>
</dbReference>
<dbReference type="GO" id="GO:0004641">
    <property type="term" value="F:phosphoribosylformylglycinamidine cyclo-ligase activity"/>
    <property type="evidence" value="ECO:0000318"/>
    <property type="project" value="GO_Central"/>
</dbReference>
<dbReference type="GO" id="GO:0006189">
    <property type="term" value="P:'de novo' IMP biosynthetic process"/>
    <property type="evidence" value="ECO:0007669"/>
    <property type="project" value="UniProtKB-UniRule"/>
</dbReference>
<dbReference type="GO" id="GO:0046084">
    <property type="term" value="P:adenine biosynthetic process"/>
    <property type="evidence" value="ECO:0000318"/>
    <property type="project" value="GO_Central"/>
</dbReference>
<dbReference type="GO" id="GO:0006164">
    <property type="term" value="P:purine nucleotide biosynthetic process"/>
    <property type="evidence" value="ECO:0000318"/>
    <property type="project" value="GO_Central"/>
</dbReference>
<dbReference type="CDD" id="cd02196">
    <property type="entry name" value="PurM"/>
    <property type="match status" value="1"/>
</dbReference>
<dbReference type="FunFam" id="3.30.1330.10:FF:000001">
    <property type="entry name" value="Phosphoribosylformylglycinamidine cyclo-ligase"/>
    <property type="match status" value="1"/>
</dbReference>
<dbReference type="FunFam" id="3.90.650.10:FF:000001">
    <property type="entry name" value="Phosphoribosylformylglycinamidine cyclo-ligase"/>
    <property type="match status" value="1"/>
</dbReference>
<dbReference type="Gene3D" id="3.90.650.10">
    <property type="entry name" value="PurM-like C-terminal domain"/>
    <property type="match status" value="1"/>
</dbReference>
<dbReference type="Gene3D" id="3.30.1330.10">
    <property type="entry name" value="PurM-like, N-terminal domain"/>
    <property type="match status" value="1"/>
</dbReference>
<dbReference type="HAMAP" id="MF_00741">
    <property type="entry name" value="AIRS"/>
    <property type="match status" value="1"/>
</dbReference>
<dbReference type="InterPro" id="IPR010918">
    <property type="entry name" value="PurM-like_C_dom"/>
</dbReference>
<dbReference type="InterPro" id="IPR036676">
    <property type="entry name" value="PurM-like_C_sf"/>
</dbReference>
<dbReference type="InterPro" id="IPR016188">
    <property type="entry name" value="PurM-like_N"/>
</dbReference>
<dbReference type="InterPro" id="IPR036921">
    <property type="entry name" value="PurM-like_N_sf"/>
</dbReference>
<dbReference type="InterPro" id="IPR004733">
    <property type="entry name" value="PurM_cligase"/>
</dbReference>
<dbReference type="NCBIfam" id="TIGR00878">
    <property type="entry name" value="purM"/>
    <property type="match status" value="1"/>
</dbReference>
<dbReference type="PANTHER" id="PTHR10520:SF12">
    <property type="entry name" value="TRIFUNCTIONAL PURINE BIOSYNTHETIC PROTEIN ADENOSINE-3"/>
    <property type="match status" value="1"/>
</dbReference>
<dbReference type="PANTHER" id="PTHR10520">
    <property type="entry name" value="TRIFUNCTIONAL PURINE BIOSYNTHETIC PROTEIN ADENOSINE-3-RELATED"/>
    <property type="match status" value="1"/>
</dbReference>
<dbReference type="Pfam" id="PF00586">
    <property type="entry name" value="AIRS"/>
    <property type="match status" value="1"/>
</dbReference>
<dbReference type="Pfam" id="PF02769">
    <property type="entry name" value="AIRS_C"/>
    <property type="match status" value="1"/>
</dbReference>
<dbReference type="SUPFAM" id="SSF56042">
    <property type="entry name" value="PurM C-terminal domain-like"/>
    <property type="match status" value="1"/>
</dbReference>
<dbReference type="SUPFAM" id="SSF55326">
    <property type="entry name" value="PurM N-terminal domain-like"/>
    <property type="match status" value="1"/>
</dbReference>
<organism>
    <name type="scientific">Listeria monocytogenes serovar 1/2a (strain ATCC BAA-679 / EGD-e)</name>
    <dbReference type="NCBI Taxonomy" id="169963"/>
    <lineage>
        <taxon>Bacteria</taxon>
        <taxon>Bacillati</taxon>
        <taxon>Bacillota</taxon>
        <taxon>Bacilli</taxon>
        <taxon>Bacillales</taxon>
        <taxon>Listeriaceae</taxon>
        <taxon>Listeria</taxon>
    </lineage>
</organism>
<gene>
    <name evidence="1" type="primary">purM</name>
    <name type="ordered locus">lmo1767</name>
</gene>
<accession>Q8Y6C3</accession>
<protein>
    <recommendedName>
        <fullName evidence="1">Phosphoribosylformylglycinamidine cyclo-ligase</fullName>
        <ecNumber evidence="1">6.3.3.1</ecNumber>
    </recommendedName>
    <alternativeName>
        <fullName evidence="1">AIR synthase</fullName>
    </alternativeName>
    <alternativeName>
        <fullName evidence="1">AIRS</fullName>
    </alternativeName>
    <alternativeName>
        <fullName evidence="1">Phosphoribosyl-aminoimidazole synthetase</fullName>
    </alternativeName>
</protein>
<reference key="1">
    <citation type="journal article" date="2001" name="Science">
        <title>Comparative genomics of Listeria species.</title>
        <authorList>
            <person name="Glaser P."/>
            <person name="Frangeul L."/>
            <person name="Buchrieser C."/>
            <person name="Rusniok C."/>
            <person name="Amend A."/>
            <person name="Baquero F."/>
            <person name="Berche P."/>
            <person name="Bloecker H."/>
            <person name="Brandt P."/>
            <person name="Chakraborty T."/>
            <person name="Charbit A."/>
            <person name="Chetouani F."/>
            <person name="Couve E."/>
            <person name="de Daruvar A."/>
            <person name="Dehoux P."/>
            <person name="Domann E."/>
            <person name="Dominguez-Bernal G."/>
            <person name="Duchaud E."/>
            <person name="Durant L."/>
            <person name="Dussurget O."/>
            <person name="Entian K.-D."/>
            <person name="Fsihi H."/>
            <person name="Garcia-del Portillo F."/>
            <person name="Garrido P."/>
            <person name="Gautier L."/>
            <person name="Goebel W."/>
            <person name="Gomez-Lopez N."/>
            <person name="Hain T."/>
            <person name="Hauf J."/>
            <person name="Jackson D."/>
            <person name="Jones L.-M."/>
            <person name="Kaerst U."/>
            <person name="Kreft J."/>
            <person name="Kuhn M."/>
            <person name="Kunst F."/>
            <person name="Kurapkat G."/>
            <person name="Madueno E."/>
            <person name="Maitournam A."/>
            <person name="Mata Vicente J."/>
            <person name="Ng E."/>
            <person name="Nedjari H."/>
            <person name="Nordsiek G."/>
            <person name="Novella S."/>
            <person name="de Pablos B."/>
            <person name="Perez-Diaz J.-C."/>
            <person name="Purcell R."/>
            <person name="Remmel B."/>
            <person name="Rose M."/>
            <person name="Schlueter T."/>
            <person name="Simoes N."/>
            <person name="Tierrez A."/>
            <person name="Vazquez-Boland J.-A."/>
            <person name="Voss H."/>
            <person name="Wehland J."/>
            <person name="Cossart P."/>
        </authorList>
    </citation>
    <scope>NUCLEOTIDE SEQUENCE [LARGE SCALE GENOMIC DNA]</scope>
    <source>
        <strain>ATCC BAA-679 / EGD-e</strain>
    </source>
</reference>
<feature type="chain" id="PRO_0000148223" description="Phosphoribosylformylglycinamidine cyclo-ligase">
    <location>
        <begin position="1"/>
        <end position="349"/>
    </location>
</feature>
<comment type="catalytic activity">
    <reaction evidence="1">
        <text>2-formamido-N(1)-(5-O-phospho-beta-D-ribosyl)acetamidine + ATP = 5-amino-1-(5-phospho-beta-D-ribosyl)imidazole + ADP + phosphate + H(+)</text>
        <dbReference type="Rhea" id="RHEA:23032"/>
        <dbReference type="ChEBI" id="CHEBI:15378"/>
        <dbReference type="ChEBI" id="CHEBI:30616"/>
        <dbReference type="ChEBI" id="CHEBI:43474"/>
        <dbReference type="ChEBI" id="CHEBI:137981"/>
        <dbReference type="ChEBI" id="CHEBI:147287"/>
        <dbReference type="ChEBI" id="CHEBI:456216"/>
        <dbReference type="EC" id="6.3.3.1"/>
    </reaction>
</comment>
<comment type="pathway">
    <text evidence="1">Purine metabolism; IMP biosynthesis via de novo pathway; 5-amino-1-(5-phospho-D-ribosyl)imidazole from N(2)-formyl-N(1)-(5-phospho-D-ribosyl)glycinamide: step 2/2.</text>
</comment>
<comment type="subcellular location">
    <subcellularLocation>
        <location evidence="1">Cytoplasm</location>
    </subcellularLocation>
</comment>
<comment type="similarity">
    <text evidence="1">Belongs to the AIR synthase family.</text>
</comment>
<proteinExistence type="inferred from homology"/>